<comment type="function">
    <text evidence="3 5">Non-SCF-type F-box protein involved in the endocytic with the vacuolar sorting pathway. Acts as a repressor of YPT52 by inhibiting the formation of active, GTP-bound, YPT52. Involved in the defense mechanism against methylmercury toxicity.</text>
</comment>
<comment type="subunit">
    <text evidence="3 4 5">Interacts with SKP1 and YPT32; SKP1 is required for the interaction with YPT32.</text>
</comment>
<comment type="interaction">
    <interactant intactId="EBI-27556">
        <id>Q04847</id>
    </interactant>
    <interactant intactId="EBI-4090">
        <id>P52286</id>
        <label>SKP1</label>
    </interactant>
    <organismsDiffer>false</organismsDiffer>
    <experiments>5</experiments>
</comment>
<comment type="interaction">
    <interactant intactId="EBI-27556">
        <id>Q04847</id>
    </interactant>
    <interactant intactId="EBI-29407">
        <id>P36018</id>
        <label>YPT52</label>
    </interactant>
    <organismsDiffer>false</organismsDiffer>
    <experiments>4</experiments>
</comment>
<comment type="subcellular location">
    <subcellularLocation>
        <location>Cytoplasm</location>
    </subcellularLocation>
    <subcellularLocation>
        <location>Nucleus</location>
    </subcellularLocation>
    <subcellularLocation>
        <location>Cytoplasmic vesicle membrane</location>
        <topology>Peripheral membrane protein</topology>
    </subcellularLocation>
</comment>
<comment type="induction">
    <text evidence="2">Expression is RSF1 and RSF2 dependent.</text>
</comment>
<comment type="domain">
    <text evidence="3">The F-box domain is required for interaction with SKP1 and defense against methylmercury toxicity.</text>
</comment>
<comment type="miscellaneous">
    <text evidence="1">Present with 3080 molecules/cell in log phase SD medium.</text>
</comment>
<reference key="1">
    <citation type="journal article" date="1997" name="Nature">
        <title>The nucleotide sequence of Saccharomyces cerevisiae chromosome XIII.</title>
        <authorList>
            <person name="Bowman S."/>
            <person name="Churcher C.M."/>
            <person name="Badcock K."/>
            <person name="Brown D."/>
            <person name="Chillingworth T."/>
            <person name="Connor R."/>
            <person name="Dedman K."/>
            <person name="Devlin K."/>
            <person name="Gentles S."/>
            <person name="Hamlin N."/>
            <person name="Hunt S."/>
            <person name="Jagels K."/>
            <person name="Lye G."/>
            <person name="Moule S."/>
            <person name="Odell C."/>
            <person name="Pearson D."/>
            <person name="Rajandream M.A."/>
            <person name="Rice P."/>
            <person name="Skelton J."/>
            <person name="Walsh S.V."/>
            <person name="Whitehead S."/>
            <person name="Barrell B.G."/>
        </authorList>
    </citation>
    <scope>NUCLEOTIDE SEQUENCE [LARGE SCALE GENOMIC DNA]</scope>
    <source>
        <strain>ATCC 204508 / S288c</strain>
    </source>
</reference>
<reference key="2">
    <citation type="journal article" date="2014" name="G3 (Bethesda)">
        <title>The reference genome sequence of Saccharomyces cerevisiae: Then and now.</title>
        <authorList>
            <person name="Engel S.R."/>
            <person name="Dietrich F.S."/>
            <person name="Fisk D.G."/>
            <person name="Binkley G."/>
            <person name="Balakrishnan R."/>
            <person name="Costanzo M.C."/>
            <person name="Dwight S.S."/>
            <person name="Hitz B.C."/>
            <person name="Karra K."/>
            <person name="Nash R.S."/>
            <person name="Weng S."/>
            <person name="Wong E.D."/>
            <person name="Lloyd P."/>
            <person name="Skrzypek M.S."/>
            <person name="Miyasato S.R."/>
            <person name="Simison M."/>
            <person name="Cherry J.M."/>
        </authorList>
    </citation>
    <scope>GENOME REANNOTATION</scope>
    <source>
        <strain>ATCC 204508 / S288c</strain>
    </source>
</reference>
<reference key="3">
    <citation type="journal article" date="2007" name="Genome Res.">
        <title>Approaching a complete repository of sequence-verified protein-encoding clones for Saccharomyces cerevisiae.</title>
        <authorList>
            <person name="Hu Y."/>
            <person name="Rolfs A."/>
            <person name="Bhullar B."/>
            <person name="Murthy T.V.S."/>
            <person name="Zhu C."/>
            <person name="Berger M.F."/>
            <person name="Camargo A.A."/>
            <person name="Kelley F."/>
            <person name="McCarron S."/>
            <person name="Jepson D."/>
            <person name="Richardson A."/>
            <person name="Raphael J."/>
            <person name="Moreira D."/>
            <person name="Taycher E."/>
            <person name="Zuo D."/>
            <person name="Mohr S."/>
            <person name="Kane M.F."/>
            <person name="Williamson J."/>
            <person name="Simpson A.J.G."/>
            <person name="Bulyk M.L."/>
            <person name="Harlow E."/>
            <person name="Marsischky G."/>
            <person name="Kolodner R.D."/>
            <person name="LaBaer J."/>
        </authorList>
    </citation>
    <scope>NUCLEOTIDE SEQUENCE [GENOMIC DNA]</scope>
    <source>
        <strain>ATCC 204508 / S288c</strain>
    </source>
</reference>
<reference key="4">
    <citation type="journal article" date="2003" name="Nature">
        <title>Global analysis of protein localization in budding yeast.</title>
        <authorList>
            <person name="Huh W.-K."/>
            <person name="Falvo J.V."/>
            <person name="Gerke L.C."/>
            <person name="Carroll A.S."/>
            <person name="Howson R.W."/>
            <person name="Weissman J.S."/>
            <person name="O'Shea E.K."/>
        </authorList>
    </citation>
    <scope>SUBCELLULAR LOCATION [LARGE SCALE ANALYSIS]</scope>
</reference>
<reference key="5">
    <citation type="journal article" date="2003" name="Nature">
        <title>Global analysis of protein expression in yeast.</title>
        <authorList>
            <person name="Ghaemmaghami S."/>
            <person name="Huh W.-K."/>
            <person name="Bower K."/>
            <person name="Howson R.W."/>
            <person name="Belle A."/>
            <person name="Dephoure N."/>
            <person name="O'Shea E.K."/>
            <person name="Weissman J.S."/>
        </authorList>
    </citation>
    <scope>LEVEL OF PROTEIN EXPRESSION [LARGE SCALE ANALYSIS]</scope>
</reference>
<reference key="6">
    <citation type="journal article" date="2009" name="J. Toxicol. Sci.">
        <title>Overexpression of the novel F-box protein Ymr258c confers resistance to methylmercury in Saccharomyces cerevisiae.</title>
        <authorList>
            <person name="Hwang G.W."/>
            <person name="Wada N."/>
            <person name="Kuge S."/>
            <person name="Naganuma A."/>
        </authorList>
    </citation>
    <scope>FUNCTION</scope>
    <scope>DOMAIN</scope>
    <scope>INTERACTION WITH SKP1</scope>
</reference>
<reference key="7">
    <citation type="journal article" date="2009" name="Yeast">
        <title>Rsf1p is required for an efficient metabolic shift from fermentative to glycerol-based respiratory growth in S. cerevisiae.</title>
        <authorList>
            <person name="Roberts G.G. III"/>
            <person name="Hudson A.P."/>
        </authorList>
    </citation>
    <scope>INDUCTION</scope>
</reference>
<reference key="8">
    <citation type="journal article" date="2010" name="Proteomics">
        <title>Remodeling of the SCF complex-mediated ubiquitination system by compositional alteration of incorporated F-box proteins.</title>
        <authorList>
            <person name="Kato M."/>
            <person name="Kito K."/>
            <person name="Ota K."/>
            <person name="Ito T."/>
        </authorList>
    </citation>
    <scope>IDENTIFICATION BY MASS SPECTROMETRY</scope>
    <scope>INTERACTION WITH SKP1</scope>
</reference>
<reference key="9">
    <citation type="journal article" date="2011" name="Mol. Biol. Cell">
        <title>Non-SCF-type F-box protein Roy1/Ymr258c interacts with a Rab5-like GTPase Ypt52 and inhibits Ypt52 function.</title>
        <authorList>
            <person name="Liu Y."/>
            <person name="Nakatsukasa K."/>
            <person name="Kotera M."/>
            <person name="Kanada A."/>
            <person name="Nishimura T."/>
            <person name="Kishi T."/>
            <person name="Mimura S."/>
            <person name="Kamura T."/>
        </authorList>
    </citation>
    <scope>FUNCTION</scope>
    <scope>SUBCELLULAR LOCATION</scope>
    <scope>INTERACTION WITH SKP1 AND YPT52</scope>
</reference>
<feature type="chain" id="PRO_0000203342" description="Non-SCF-type F-box protein ROY1">
    <location>
        <begin position="1"/>
        <end position="553"/>
    </location>
</feature>
<feature type="domain" description="F-box">
    <location>
        <begin position="3"/>
        <end position="49"/>
    </location>
</feature>
<protein>
    <recommendedName>
        <fullName>Non-SCF-type F-box protein ROY1</fullName>
    </recommendedName>
    <alternativeName>
        <fullName>Repressor of YPT52</fullName>
    </alternativeName>
</protein>
<proteinExistence type="evidence at protein level"/>
<keyword id="KW-0963">Cytoplasm</keyword>
<keyword id="KW-0968">Cytoplasmic vesicle</keyword>
<keyword id="KW-0472">Membrane</keyword>
<keyword id="KW-0539">Nucleus</keyword>
<keyword id="KW-1185">Reference proteome</keyword>
<name>ROY1_YEAST</name>
<evidence type="ECO:0000269" key="1">
    <source>
    </source>
</evidence>
<evidence type="ECO:0000269" key="2">
    <source>
    </source>
</evidence>
<evidence type="ECO:0000269" key="3">
    <source>
    </source>
</evidence>
<evidence type="ECO:0000269" key="4">
    <source>
    </source>
</evidence>
<evidence type="ECO:0000269" key="5">
    <source>
    </source>
</evidence>
<dbReference type="EMBL" id="Z48639">
    <property type="protein sequence ID" value="CAA88585.1"/>
    <property type="molecule type" value="Genomic_DNA"/>
</dbReference>
<dbReference type="EMBL" id="AY692563">
    <property type="protein sequence ID" value="AAT92582.1"/>
    <property type="molecule type" value="Genomic_DNA"/>
</dbReference>
<dbReference type="EMBL" id="BK006946">
    <property type="protein sequence ID" value="DAA10158.1"/>
    <property type="molecule type" value="Genomic_DNA"/>
</dbReference>
<dbReference type="PIR" id="S53080">
    <property type="entry name" value="S53080"/>
</dbReference>
<dbReference type="RefSeq" id="NP_013985.1">
    <property type="nucleotide sequence ID" value="NM_001182765.1"/>
</dbReference>
<dbReference type="BioGRID" id="35436">
    <property type="interactions" value="63"/>
</dbReference>
<dbReference type="DIP" id="DIP-4403N"/>
<dbReference type="FunCoup" id="Q04847">
    <property type="interactions" value="171"/>
</dbReference>
<dbReference type="IntAct" id="Q04847">
    <property type="interactions" value="7"/>
</dbReference>
<dbReference type="MINT" id="Q04847"/>
<dbReference type="STRING" id="4932.YMR258C"/>
<dbReference type="iPTMnet" id="Q04847"/>
<dbReference type="PaxDb" id="4932-YMR258C"/>
<dbReference type="PeptideAtlas" id="Q04847"/>
<dbReference type="EnsemblFungi" id="YMR258C_mRNA">
    <property type="protein sequence ID" value="YMR258C"/>
    <property type="gene ID" value="YMR258C"/>
</dbReference>
<dbReference type="GeneID" id="855300"/>
<dbReference type="KEGG" id="sce:YMR258C"/>
<dbReference type="AGR" id="SGD:S000004871"/>
<dbReference type="SGD" id="S000004871">
    <property type="gene designation" value="ROY1"/>
</dbReference>
<dbReference type="VEuPathDB" id="FungiDB:YMR258C"/>
<dbReference type="eggNOG" id="ENOG502R4NW">
    <property type="taxonomic scope" value="Eukaryota"/>
</dbReference>
<dbReference type="HOGENOM" id="CLU_446963_0_0_1"/>
<dbReference type="InParanoid" id="Q04847"/>
<dbReference type="OMA" id="LWNGCEC"/>
<dbReference type="OrthoDB" id="3976101at2759"/>
<dbReference type="BioCyc" id="YEAST:G3O-32933-MONOMER"/>
<dbReference type="BioGRID-ORCS" id="855300">
    <property type="hits" value="1 hit in 10 CRISPR screens"/>
</dbReference>
<dbReference type="PRO" id="PR:Q04847"/>
<dbReference type="Proteomes" id="UP000002311">
    <property type="component" value="Chromosome XIII"/>
</dbReference>
<dbReference type="RNAct" id="Q04847">
    <property type="molecule type" value="protein"/>
</dbReference>
<dbReference type="GO" id="GO:0005737">
    <property type="term" value="C:cytoplasm"/>
    <property type="evidence" value="ECO:0007005"/>
    <property type="project" value="SGD"/>
</dbReference>
<dbReference type="GO" id="GO:0030659">
    <property type="term" value="C:cytoplasmic vesicle membrane"/>
    <property type="evidence" value="ECO:0007669"/>
    <property type="project" value="UniProtKB-SubCell"/>
</dbReference>
<dbReference type="GO" id="GO:0005783">
    <property type="term" value="C:endoplasmic reticulum"/>
    <property type="evidence" value="ECO:0007005"/>
    <property type="project" value="SGD"/>
</dbReference>
<dbReference type="GO" id="GO:0005634">
    <property type="term" value="C:nucleus"/>
    <property type="evidence" value="ECO:0007005"/>
    <property type="project" value="SGD"/>
</dbReference>
<dbReference type="GO" id="GO:0005095">
    <property type="term" value="F:GTPase inhibitor activity"/>
    <property type="evidence" value="ECO:0000314"/>
    <property type="project" value="SGD"/>
</dbReference>
<dbReference type="GO" id="GO:0006897">
    <property type="term" value="P:endocytosis"/>
    <property type="evidence" value="ECO:0000316"/>
    <property type="project" value="SGD"/>
</dbReference>
<dbReference type="GO" id="GO:0006623">
    <property type="term" value="P:protein targeting to vacuole"/>
    <property type="evidence" value="ECO:0000316"/>
    <property type="project" value="SGD"/>
</dbReference>
<accession>Q04847</accession>
<accession>D6W084</accession>
<sequence length="553" mass="64405">MAFQDQDIFIVFSHASLFLNQNDLLSLSLTSKKMHDMIAIPRLYSNIHITKNPVLRTNKWFLDGGKTYVSGYRSVLKTGDKNDIFLYDRIERLLETSHLKCIKQLTIDEDLFHNREEGLQLLQRLVNEITDLDVIESLDIKDPTLFELCSAKYYRLSSLKKRVVYGETGFDGIKLWQNFKSLKWQLPESLDLQNVIIPEVGVMLMKQLNGGELEIKDEAYSSLRVFEYFDSLNLRFKNLRRLKLNHVHKQGDGSATSMRLSSRAFKDVVNLSNLKALELEFSCEVDDCECDDDFLQDITGNLVSLTSLGFIEKTFTKKGYHYMDEKWDLVVNKFILNLPNVSKDLRLLSIRHDPPLNGKGIDTVDGNLLRRKKLYEKVLPKLTSLETIIAPTVLQSITSYEMYACDLLWNGCKCAFCSKYLPLFDKYIMNHQYFSTPDARYLDIIPIVFAAYTGKSLAKRFDPQKNWDLDLLQYAPEDTTWNFHGFERIHHFASYECYFDESSFEPLATIISHFFYPYMNYLIKILPNLRQTMLSGIYFSVSPELHTYETIYD</sequence>
<gene>
    <name type="primary">ROY1</name>
    <name type="ordered locus">YMR258C</name>
    <name type="ORF">YM9920.12C</name>
</gene>
<organism>
    <name type="scientific">Saccharomyces cerevisiae (strain ATCC 204508 / S288c)</name>
    <name type="common">Baker's yeast</name>
    <dbReference type="NCBI Taxonomy" id="559292"/>
    <lineage>
        <taxon>Eukaryota</taxon>
        <taxon>Fungi</taxon>
        <taxon>Dikarya</taxon>
        <taxon>Ascomycota</taxon>
        <taxon>Saccharomycotina</taxon>
        <taxon>Saccharomycetes</taxon>
        <taxon>Saccharomycetales</taxon>
        <taxon>Saccharomycetaceae</taxon>
        <taxon>Saccharomyces</taxon>
    </lineage>
</organism>